<reference key="1">
    <citation type="journal article" date="2001" name="Nature">
        <title>Complete genome sequence of Salmonella enterica serovar Typhimurium LT2.</title>
        <authorList>
            <person name="McClelland M."/>
            <person name="Sanderson K.E."/>
            <person name="Spieth J."/>
            <person name="Clifton S.W."/>
            <person name="Latreille P."/>
            <person name="Courtney L."/>
            <person name="Porwollik S."/>
            <person name="Ali J."/>
            <person name="Dante M."/>
            <person name="Du F."/>
            <person name="Hou S."/>
            <person name="Layman D."/>
            <person name="Leonard S."/>
            <person name="Nguyen C."/>
            <person name="Scott K."/>
            <person name="Holmes A."/>
            <person name="Grewal N."/>
            <person name="Mulvaney E."/>
            <person name="Ryan E."/>
            <person name="Sun H."/>
            <person name="Florea L."/>
            <person name="Miller W."/>
            <person name="Stoneking T."/>
            <person name="Nhan M."/>
            <person name="Waterston R."/>
            <person name="Wilson R.K."/>
        </authorList>
    </citation>
    <scope>NUCLEOTIDE SEQUENCE [LARGE SCALE GENOMIC DNA]</scope>
    <source>
        <strain>LT2 / SGSC1412 / ATCC 700720</strain>
    </source>
</reference>
<proteinExistence type="inferred from homology"/>
<accession>Q8ZS14</accession>
<gene>
    <name evidence="1" type="primary">yaaI</name>
    <name type="ordered locus">STM0011</name>
</gene>
<sequence length="134" mass="14465">MRSVLTISVGLLFGLALSSVAHANDHKILGVIAMPRNETNDLTLKIPVCRIVKRIQLTADHGDIELSGASVYFKTARSASQSLNVPSSIKEGQTTGWININSDNDNKRCVSKITFSGHTVNSSDMARLKVIGDD</sequence>
<comment type="similarity">
    <text evidence="1">Belongs to the UPF0412 family.</text>
</comment>
<evidence type="ECO:0000255" key="1">
    <source>
        <dbReference type="HAMAP-Rule" id="MF_01372"/>
    </source>
</evidence>
<feature type="signal peptide" evidence="1">
    <location>
        <begin position="1"/>
        <end position="23"/>
    </location>
</feature>
<feature type="chain" id="PRO_0000278589" description="UPF0412 protein YaaI">
    <location>
        <begin position="24"/>
        <end position="134"/>
    </location>
</feature>
<protein>
    <recommendedName>
        <fullName evidence="1">UPF0412 protein YaaI</fullName>
    </recommendedName>
</protein>
<organism>
    <name type="scientific">Salmonella typhimurium (strain LT2 / SGSC1412 / ATCC 700720)</name>
    <dbReference type="NCBI Taxonomy" id="99287"/>
    <lineage>
        <taxon>Bacteria</taxon>
        <taxon>Pseudomonadati</taxon>
        <taxon>Pseudomonadota</taxon>
        <taxon>Gammaproteobacteria</taxon>
        <taxon>Enterobacterales</taxon>
        <taxon>Enterobacteriaceae</taxon>
        <taxon>Salmonella</taxon>
    </lineage>
</organism>
<dbReference type="EMBL" id="AE006468">
    <property type="protein sequence ID" value="AAL18975.1"/>
    <property type="molecule type" value="Genomic_DNA"/>
</dbReference>
<dbReference type="RefSeq" id="NP_459016.1">
    <property type="nucleotide sequence ID" value="NC_003197.2"/>
</dbReference>
<dbReference type="RefSeq" id="WP_001258094.1">
    <property type="nucleotide sequence ID" value="NC_003197.2"/>
</dbReference>
<dbReference type="STRING" id="99287.STM0011"/>
<dbReference type="PaxDb" id="99287-STM0011"/>
<dbReference type="GeneID" id="1251529"/>
<dbReference type="KEGG" id="stm:STM0011"/>
<dbReference type="PATRIC" id="fig|99287.12.peg.10"/>
<dbReference type="HOGENOM" id="CLU_158661_0_0_6"/>
<dbReference type="OMA" id="CVKKIAF"/>
<dbReference type="PhylomeDB" id="Q8ZS14"/>
<dbReference type="BioCyc" id="SENT99287:STM0011-MONOMER"/>
<dbReference type="Proteomes" id="UP000001014">
    <property type="component" value="Chromosome"/>
</dbReference>
<dbReference type="HAMAP" id="MF_01372">
    <property type="entry name" value="UPF0412"/>
    <property type="match status" value="1"/>
</dbReference>
<dbReference type="InterPro" id="IPR020240">
    <property type="entry name" value="UPF0412_YaaI"/>
</dbReference>
<dbReference type="NCBIfam" id="NF007541">
    <property type="entry name" value="PRK10154.1"/>
    <property type="match status" value="1"/>
</dbReference>
<dbReference type="Pfam" id="PF10807">
    <property type="entry name" value="DUF2541"/>
    <property type="match status" value="1"/>
</dbReference>
<name>YAAI_SALTY</name>
<keyword id="KW-1185">Reference proteome</keyword>
<keyword id="KW-0732">Signal</keyword>